<dbReference type="EMBL" id="AC022354">
    <property type="protein sequence ID" value="AAF29406.2"/>
    <property type="molecule type" value="Genomic_DNA"/>
</dbReference>
<dbReference type="EMBL" id="CP002684">
    <property type="protein sequence ID" value="AEE32768.1"/>
    <property type="molecule type" value="Genomic_DNA"/>
</dbReference>
<dbReference type="EMBL" id="BT004773">
    <property type="protein sequence ID" value="AAO44039.1"/>
    <property type="molecule type" value="mRNA"/>
</dbReference>
<dbReference type="EMBL" id="AY085651">
    <property type="protein sequence ID" value="AAM62872.1"/>
    <property type="molecule type" value="mRNA"/>
</dbReference>
<dbReference type="EMBL" id="AK227386">
    <property type="protein sequence ID" value="BAE99392.1"/>
    <property type="molecule type" value="mRNA"/>
</dbReference>
<dbReference type="PIR" id="A96562">
    <property type="entry name" value="A96562"/>
</dbReference>
<dbReference type="RefSeq" id="NP_564602.1">
    <property type="nucleotide sequence ID" value="NM_104100.5"/>
</dbReference>
<dbReference type="BioGRID" id="26875">
    <property type="interactions" value="2"/>
</dbReference>
<dbReference type="FunCoup" id="Q9M815">
    <property type="interactions" value="123"/>
</dbReference>
<dbReference type="STRING" id="3702.Q9M815"/>
<dbReference type="iPTMnet" id="Q9M815"/>
<dbReference type="PaxDb" id="3702-AT1G52200.1"/>
<dbReference type="ProteomicsDB" id="236666"/>
<dbReference type="EnsemblPlants" id="AT1G52200.1">
    <property type="protein sequence ID" value="AT1G52200.1"/>
    <property type="gene ID" value="AT1G52200"/>
</dbReference>
<dbReference type="GeneID" id="841650"/>
<dbReference type="Gramene" id="AT1G52200.1">
    <property type="protein sequence ID" value="AT1G52200.1"/>
    <property type="gene ID" value="AT1G52200"/>
</dbReference>
<dbReference type="KEGG" id="ath:AT1G52200"/>
<dbReference type="Araport" id="AT1G52200"/>
<dbReference type="TAIR" id="AT1G52200"/>
<dbReference type="eggNOG" id="ENOG502RZFT">
    <property type="taxonomic scope" value="Eukaryota"/>
</dbReference>
<dbReference type="HOGENOM" id="CLU_083147_1_1_1"/>
<dbReference type="InParanoid" id="Q9M815"/>
<dbReference type="OMA" id="QTNAIMT"/>
<dbReference type="PhylomeDB" id="Q9M815"/>
<dbReference type="PRO" id="PR:Q9M815"/>
<dbReference type="Proteomes" id="UP000006548">
    <property type="component" value="Chromosome 1"/>
</dbReference>
<dbReference type="ExpressionAtlas" id="Q9M815">
    <property type="expression patterns" value="baseline and differential"/>
</dbReference>
<dbReference type="GO" id="GO:0005886">
    <property type="term" value="C:plasma membrane"/>
    <property type="evidence" value="ECO:0007669"/>
    <property type="project" value="UniProtKB-SubCell"/>
</dbReference>
<dbReference type="GO" id="GO:0006979">
    <property type="term" value="P:response to oxidative stress"/>
    <property type="evidence" value="ECO:0000315"/>
    <property type="project" value="TAIR"/>
</dbReference>
<dbReference type="InterPro" id="IPR006461">
    <property type="entry name" value="PLAC_motif_containing"/>
</dbReference>
<dbReference type="NCBIfam" id="TIGR01571">
    <property type="entry name" value="A_thal_Cys_rich"/>
    <property type="match status" value="1"/>
</dbReference>
<dbReference type="PANTHER" id="PTHR15907">
    <property type="entry name" value="DUF614 FAMILY PROTEIN-RELATED"/>
    <property type="match status" value="1"/>
</dbReference>
<dbReference type="Pfam" id="PF04749">
    <property type="entry name" value="PLAC8"/>
    <property type="match status" value="1"/>
</dbReference>
<accession>Q9M815</accession>
<accession>Q8LE32</accession>
<sequence>MGRVTTPSEEDSNNGLPVQQPGTPNQRTRVPVSQFAPPNYQQANVNLSVGRPWSTGLFDCQADQANAVLTTIVPCVTFGQIAEVMDEGEMTCPLGTFMYLLMMPALCSHWVMGSKYREKMRRKFNLVEAPYSDCASHVLCPCCSLCQEYRELKIRNLDPSLGWNGILAQGQGQYEREAPSFAPTNQYMSK</sequence>
<comment type="function">
    <text evidence="1">May be involved in heavy metals transport.</text>
</comment>
<comment type="subcellular location">
    <subcellularLocation>
        <location evidence="4">Cell membrane</location>
        <topology evidence="4">Single-pass membrane protein</topology>
    </subcellularLocation>
</comment>
<comment type="similarity">
    <text evidence="5">Belongs to the cornifelin family.</text>
</comment>
<name>PCR8_ARATH</name>
<reference key="1">
    <citation type="journal article" date="2000" name="Nature">
        <title>Sequence and analysis of chromosome 1 of the plant Arabidopsis thaliana.</title>
        <authorList>
            <person name="Theologis A."/>
            <person name="Ecker J.R."/>
            <person name="Palm C.J."/>
            <person name="Federspiel N.A."/>
            <person name="Kaul S."/>
            <person name="White O."/>
            <person name="Alonso J."/>
            <person name="Altafi H."/>
            <person name="Araujo R."/>
            <person name="Bowman C.L."/>
            <person name="Brooks S.Y."/>
            <person name="Buehler E."/>
            <person name="Chan A."/>
            <person name="Chao Q."/>
            <person name="Chen H."/>
            <person name="Cheuk R.F."/>
            <person name="Chin C.W."/>
            <person name="Chung M.K."/>
            <person name="Conn L."/>
            <person name="Conway A.B."/>
            <person name="Conway A.R."/>
            <person name="Creasy T.H."/>
            <person name="Dewar K."/>
            <person name="Dunn P."/>
            <person name="Etgu P."/>
            <person name="Feldblyum T.V."/>
            <person name="Feng J.-D."/>
            <person name="Fong B."/>
            <person name="Fujii C.Y."/>
            <person name="Gill J.E."/>
            <person name="Goldsmith A.D."/>
            <person name="Haas B."/>
            <person name="Hansen N.F."/>
            <person name="Hughes B."/>
            <person name="Huizar L."/>
            <person name="Hunter J.L."/>
            <person name="Jenkins J."/>
            <person name="Johnson-Hopson C."/>
            <person name="Khan S."/>
            <person name="Khaykin E."/>
            <person name="Kim C.J."/>
            <person name="Koo H.L."/>
            <person name="Kremenetskaia I."/>
            <person name="Kurtz D.B."/>
            <person name="Kwan A."/>
            <person name="Lam B."/>
            <person name="Langin-Hooper S."/>
            <person name="Lee A."/>
            <person name="Lee J.M."/>
            <person name="Lenz C.A."/>
            <person name="Li J.H."/>
            <person name="Li Y.-P."/>
            <person name="Lin X."/>
            <person name="Liu S.X."/>
            <person name="Liu Z.A."/>
            <person name="Luros J.S."/>
            <person name="Maiti R."/>
            <person name="Marziali A."/>
            <person name="Militscher J."/>
            <person name="Miranda M."/>
            <person name="Nguyen M."/>
            <person name="Nierman W.C."/>
            <person name="Osborne B.I."/>
            <person name="Pai G."/>
            <person name="Peterson J."/>
            <person name="Pham P.K."/>
            <person name="Rizzo M."/>
            <person name="Rooney T."/>
            <person name="Rowley D."/>
            <person name="Sakano H."/>
            <person name="Salzberg S.L."/>
            <person name="Schwartz J.R."/>
            <person name="Shinn P."/>
            <person name="Southwick A.M."/>
            <person name="Sun H."/>
            <person name="Tallon L.J."/>
            <person name="Tambunga G."/>
            <person name="Toriumi M.J."/>
            <person name="Town C.D."/>
            <person name="Utterback T."/>
            <person name="Van Aken S."/>
            <person name="Vaysberg M."/>
            <person name="Vysotskaia V.S."/>
            <person name="Walker M."/>
            <person name="Wu D."/>
            <person name="Yu G."/>
            <person name="Fraser C.M."/>
            <person name="Venter J.C."/>
            <person name="Davis R.W."/>
        </authorList>
    </citation>
    <scope>NUCLEOTIDE SEQUENCE [LARGE SCALE GENOMIC DNA]</scope>
    <source>
        <strain>cv. Columbia</strain>
    </source>
</reference>
<reference key="2">
    <citation type="journal article" date="2017" name="Plant J.">
        <title>Araport11: a complete reannotation of the Arabidopsis thaliana reference genome.</title>
        <authorList>
            <person name="Cheng C.Y."/>
            <person name="Krishnakumar V."/>
            <person name="Chan A.P."/>
            <person name="Thibaud-Nissen F."/>
            <person name="Schobel S."/>
            <person name="Town C.D."/>
        </authorList>
    </citation>
    <scope>GENOME REANNOTATION</scope>
    <source>
        <strain>cv. Columbia</strain>
    </source>
</reference>
<reference key="3">
    <citation type="journal article" date="2003" name="Science">
        <title>Empirical analysis of transcriptional activity in the Arabidopsis genome.</title>
        <authorList>
            <person name="Yamada K."/>
            <person name="Lim J."/>
            <person name="Dale J.M."/>
            <person name="Chen H."/>
            <person name="Shinn P."/>
            <person name="Palm C.J."/>
            <person name="Southwick A.M."/>
            <person name="Wu H.C."/>
            <person name="Kim C.J."/>
            <person name="Nguyen M."/>
            <person name="Pham P.K."/>
            <person name="Cheuk R.F."/>
            <person name="Karlin-Newmann G."/>
            <person name="Liu S.X."/>
            <person name="Lam B."/>
            <person name="Sakano H."/>
            <person name="Wu T."/>
            <person name="Yu G."/>
            <person name="Miranda M."/>
            <person name="Quach H.L."/>
            <person name="Tripp M."/>
            <person name="Chang C.H."/>
            <person name="Lee J.M."/>
            <person name="Toriumi M.J."/>
            <person name="Chan M.M."/>
            <person name="Tang C.C."/>
            <person name="Onodera C.S."/>
            <person name="Deng J.M."/>
            <person name="Akiyama K."/>
            <person name="Ansari Y."/>
            <person name="Arakawa T."/>
            <person name="Banh J."/>
            <person name="Banno F."/>
            <person name="Bowser L."/>
            <person name="Brooks S.Y."/>
            <person name="Carninci P."/>
            <person name="Chao Q."/>
            <person name="Choy N."/>
            <person name="Enju A."/>
            <person name="Goldsmith A.D."/>
            <person name="Gurjal M."/>
            <person name="Hansen N.F."/>
            <person name="Hayashizaki Y."/>
            <person name="Johnson-Hopson C."/>
            <person name="Hsuan V.W."/>
            <person name="Iida K."/>
            <person name="Karnes M."/>
            <person name="Khan S."/>
            <person name="Koesema E."/>
            <person name="Ishida J."/>
            <person name="Jiang P.X."/>
            <person name="Jones T."/>
            <person name="Kawai J."/>
            <person name="Kamiya A."/>
            <person name="Meyers C."/>
            <person name="Nakajima M."/>
            <person name="Narusaka M."/>
            <person name="Seki M."/>
            <person name="Sakurai T."/>
            <person name="Satou M."/>
            <person name="Tamse R."/>
            <person name="Vaysberg M."/>
            <person name="Wallender E.K."/>
            <person name="Wong C."/>
            <person name="Yamamura Y."/>
            <person name="Yuan S."/>
            <person name="Shinozaki K."/>
            <person name="Davis R.W."/>
            <person name="Theologis A."/>
            <person name="Ecker J.R."/>
        </authorList>
    </citation>
    <scope>NUCLEOTIDE SEQUENCE [LARGE SCALE MRNA]</scope>
    <source>
        <strain>cv. Columbia</strain>
    </source>
</reference>
<reference key="4">
    <citation type="submission" date="2002-03" db="EMBL/GenBank/DDBJ databases">
        <title>Full-length cDNA from Arabidopsis thaliana.</title>
        <authorList>
            <person name="Brover V.V."/>
            <person name="Troukhan M.E."/>
            <person name="Alexandrov N.A."/>
            <person name="Lu Y.-P."/>
            <person name="Flavell R.B."/>
            <person name="Feldmann K.A."/>
        </authorList>
    </citation>
    <scope>NUCLEOTIDE SEQUENCE [LARGE SCALE MRNA]</scope>
</reference>
<reference key="5">
    <citation type="submission" date="2006-07" db="EMBL/GenBank/DDBJ databases">
        <title>Large-scale analysis of RIKEN Arabidopsis full-length (RAFL) cDNAs.</title>
        <authorList>
            <person name="Totoki Y."/>
            <person name="Seki M."/>
            <person name="Ishida J."/>
            <person name="Nakajima M."/>
            <person name="Enju A."/>
            <person name="Kamiya A."/>
            <person name="Narusaka M."/>
            <person name="Shin-i T."/>
            <person name="Nakagawa M."/>
            <person name="Sakamoto N."/>
            <person name="Oishi K."/>
            <person name="Kohara Y."/>
            <person name="Kobayashi M."/>
            <person name="Toyoda A."/>
            <person name="Sakaki Y."/>
            <person name="Sakurai T."/>
            <person name="Iida K."/>
            <person name="Akiyama K."/>
            <person name="Satou M."/>
            <person name="Toyoda T."/>
            <person name="Konagaya A."/>
            <person name="Carninci P."/>
            <person name="Kawai J."/>
            <person name="Hayashizaki Y."/>
            <person name="Shinozaki K."/>
        </authorList>
    </citation>
    <scope>NUCLEOTIDE SEQUENCE [LARGE SCALE MRNA]</scope>
    <source>
        <strain>cv. Columbia</strain>
    </source>
</reference>
<reference key="6">
    <citation type="journal article" date="2004" name="Plant Physiol.">
        <title>A novel family of cys-rich membrane proteins mediates cadmium resistance in Arabidopsis.</title>
        <authorList>
            <person name="Song W.Y."/>
            <person name="Martinoia E."/>
            <person name="Lee J."/>
            <person name="Kim D."/>
            <person name="Kim D.Y."/>
            <person name="Vogt E."/>
            <person name="Shim D."/>
            <person name="Choi K.S."/>
            <person name="Hwang I."/>
            <person name="Lee Y."/>
        </authorList>
    </citation>
    <scope>GENE FAMILY</scope>
    <scope>NOMENCLATURE</scope>
</reference>
<reference key="7">
    <citation type="journal article" date="2009" name="J. Proteome Res.">
        <title>An efficient organic solvent based extraction method for the proteomic analysis of Arabidopsis plasma membranes.</title>
        <authorList>
            <person name="Mitra S.K."/>
            <person name="Walters B.T."/>
            <person name="Clouse S.D."/>
            <person name="Goshe M.B."/>
        </authorList>
    </citation>
    <scope>SUBCELLULAR LOCATION</scope>
</reference>
<reference key="8">
    <citation type="journal article" date="2009" name="Plant Physiol.">
        <title>Large-scale Arabidopsis phosphoproteome profiling reveals novel chloroplast kinase substrates and phosphorylation networks.</title>
        <authorList>
            <person name="Reiland S."/>
            <person name="Messerli G."/>
            <person name="Baerenfaller K."/>
            <person name="Gerrits B."/>
            <person name="Endler A."/>
            <person name="Grossmann J."/>
            <person name="Gruissem W."/>
            <person name="Baginsky S."/>
        </authorList>
    </citation>
    <scope>PHOSPHORYLATION [LARGE SCALE ANALYSIS] AT THR-23</scope>
    <scope>IDENTIFICATION BY MASS SPECTROMETRY [LARGE SCALE ANALYSIS]</scope>
</reference>
<gene>
    <name type="primary">PCR8</name>
    <name type="ordered locus">At1g52200</name>
    <name type="ORF">F9I5.19</name>
</gene>
<protein>
    <recommendedName>
        <fullName>Protein PLANT CADMIUM RESISTANCE 8</fullName>
        <shortName>AtPCR8</shortName>
    </recommendedName>
</protein>
<organism>
    <name type="scientific">Arabidopsis thaliana</name>
    <name type="common">Mouse-ear cress</name>
    <dbReference type="NCBI Taxonomy" id="3702"/>
    <lineage>
        <taxon>Eukaryota</taxon>
        <taxon>Viridiplantae</taxon>
        <taxon>Streptophyta</taxon>
        <taxon>Embryophyta</taxon>
        <taxon>Tracheophyta</taxon>
        <taxon>Spermatophyta</taxon>
        <taxon>Magnoliopsida</taxon>
        <taxon>eudicotyledons</taxon>
        <taxon>Gunneridae</taxon>
        <taxon>Pentapetalae</taxon>
        <taxon>rosids</taxon>
        <taxon>malvids</taxon>
        <taxon>Brassicales</taxon>
        <taxon>Brassicaceae</taxon>
        <taxon>Camelineae</taxon>
        <taxon>Arabidopsis</taxon>
    </lineage>
</organism>
<evidence type="ECO:0000250" key="1"/>
<evidence type="ECO:0000255" key="2"/>
<evidence type="ECO:0000256" key="3">
    <source>
        <dbReference type="SAM" id="MobiDB-lite"/>
    </source>
</evidence>
<evidence type="ECO:0000269" key="4">
    <source>
    </source>
</evidence>
<evidence type="ECO:0000305" key="5"/>
<evidence type="ECO:0007744" key="6">
    <source>
    </source>
</evidence>
<feature type="chain" id="PRO_0000407724" description="Protein PLANT CADMIUM RESISTANCE 8">
    <location>
        <begin position="1"/>
        <end position="190"/>
    </location>
</feature>
<feature type="transmembrane region" description="Helical" evidence="2">
    <location>
        <begin position="94"/>
        <end position="113"/>
    </location>
</feature>
<feature type="region of interest" description="Disordered" evidence="3">
    <location>
        <begin position="1"/>
        <end position="31"/>
    </location>
</feature>
<feature type="compositionally biased region" description="Polar residues" evidence="3">
    <location>
        <begin position="13"/>
        <end position="28"/>
    </location>
</feature>
<feature type="modified residue" description="Phosphothreonine" evidence="6">
    <location>
        <position position="23"/>
    </location>
</feature>
<feature type="sequence conflict" description="In Ref. 4; AAM62872." evidence="5" ref="4">
    <original>R</original>
    <variation>S</variation>
    <location>
        <position position="176"/>
    </location>
</feature>
<keyword id="KW-1003">Cell membrane</keyword>
<keyword id="KW-0472">Membrane</keyword>
<keyword id="KW-0597">Phosphoprotein</keyword>
<keyword id="KW-1185">Reference proteome</keyword>
<keyword id="KW-0812">Transmembrane</keyword>
<keyword id="KW-1133">Transmembrane helix</keyword>
<proteinExistence type="evidence at protein level"/>